<accession>Q056Z1</accession>
<gene>
    <name evidence="1" type="primary">nfuA</name>
    <name type="ordered locus">BCc_355</name>
</gene>
<evidence type="ECO:0000255" key="1">
    <source>
        <dbReference type="HAMAP-Rule" id="MF_01637"/>
    </source>
</evidence>
<organism>
    <name type="scientific">Buchnera aphidicola subsp. Cinara cedri (strain Cc)</name>
    <dbReference type="NCBI Taxonomy" id="372461"/>
    <lineage>
        <taxon>Bacteria</taxon>
        <taxon>Pseudomonadati</taxon>
        <taxon>Pseudomonadota</taxon>
        <taxon>Gammaproteobacteria</taxon>
        <taxon>Enterobacterales</taxon>
        <taxon>Erwiniaceae</taxon>
        <taxon>Buchnera</taxon>
    </lineage>
</organism>
<dbReference type="EMBL" id="CP000263">
    <property type="protein sequence ID" value="ABJ90808.1"/>
    <property type="molecule type" value="Genomic_DNA"/>
</dbReference>
<dbReference type="RefSeq" id="WP_011672727.1">
    <property type="nucleotide sequence ID" value="NC_008513.1"/>
</dbReference>
<dbReference type="SMR" id="Q056Z1"/>
<dbReference type="STRING" id="372461.BCc_355"/>
<dbReference type="KEGG" id="bcc:BCc_355"/>
<dbReference type="eggNOG" id="COG0694">
    <property type="taxonomic scope" value="Bacteria"/>
</dbReference>
<dbReference type="HOGENOM" id="CLU_094569_0_0_6"/>
<dbReference type="OrthoDB" id="9785450at2"/>
<dbReference type="Proteomes" id="UP000000669">
    <property type="component" value="Chromosome"/>
</dbReference>
<dbReference type="GO" id="GO:0051539">
    <property type="term" value="F:4 iron, 4 sulfur cluster binding"/>
    <property type="evidence" value="ECO:0007669"/>
    <property type="project" value="UniProtKB-UniRule"/>
</dbReference>
<dbReference type="GO" id="GO:0005506">
    <property type="term" value="F:iron ion binding"/>
    <property type="evidence" value="ECO:0007669"/>
    <property type="project" value="InterPro"/>
</dbReference>
<dbReference type="GO" id="GO:0016226">
    <property type="term" value="P:iron-sulfur cluster assembly"/>
    <property type="evidence" value="ECO:0007669"/>
    <property type="project" value="UniProtKB-UniRule"/>
</dbReference>
<dbReference type="GO" id="GO:0051604">
    <property type="term" value="P:protein maturation"/>
    <property type="evidence" value="ECO:0007669"/>
    <property type="project" value="UniProtKB-UniRule"/>
</dbReference>
<dbReference type="Gene3D" id="3.30.300.130">
    <property type="entry name" value="Fe-S cluster assembly (FSCA)"/>
    <property type="match status" value="1"/>
</dbReference>
<dbReference type="Gene3D" id="2.60.300.12">
    <property type="entry name" value="HesB-like domain"/>
    <property type="match status" value="1"/>
</dbReference>
<dbReference type="HAMAP" id="MF_01637">
    <property type="entry name" value="Fe_S_biogen_NfuA"/>
    <property type="match status" value="1"/>
</dbReference>
<dbReference type="InterPro" id="IPR017726">
    <property type="entry name" value="Fe/S_biogenesis_protein_NfuA"/>
</dbReference>
<dbReference type="InterPro" id="IPR000361">
    <property type="entry name" value="FeS_biogenesis"/>
</dbReference>
<dbReference type="InterPro" id="IPR034904">
    <property type="entry name" value="FSCA_dom_sf"/>
</dbReference>
<dbReference type="InterPro" id="IPR035903">
    <property type="entry name" value="HesB-like_dom_sf"/>
</dbReference>
<dbReference type="InterPro" id="IPR001075">
    <property type="entry name" value="NIF_FeS_clus_asmbl_NifU_C"/>
</dbReference>
<dbReference type="PANTHER" id="PTHR11178:SF51">
    <property type="entry name" value="FE_S BIOGENESIS PROTEIN NFUA"/>
    <property type="match status" value="1"/>
</dbReference>
<dbReference type="PANTHER" id="PTHR11178">
    <property type="entry name" value="IRON-SULFUR CLUSTER SCAFFOLD PROTEIN NFU-RELATED"/>
    <property type="match status" value="1"/>
</dbReference>
<dbReference type="Pfam" id="PF01521">
    <property type="entry name" value="Fe-S_biosyn"/>
    <property type="match status" value="1"/>
</dbReference>
<dbReference type="Pfam" id="PF01106">
    <property type="entry name" value="NifU"/>
    <property type="match status" value="1"/>
</dbReference>
<dbReference type="SUPFAM" id="SSF117916">
    <property type="entry name" value="Fe-S cluster assembly (FSCA) domain-like"/>
    <property type="match status" value="1"/>
</dbReference>
<dbReference type="SUPFAM" id="SSF89360">
    <property type="entry name" value="HesB-like domain"/>
    <property type="match status" value="1"/>
</dbReference>
<keyword id="KW-0004">4Fe-4S</keyword>
<keyword id="KW-0408">Iron</keyword>
<keyword id="KW-0411">Iron-sulfur</keyword>
<keyword id="KW-0479">Metal-binding</keyword>
<keyword id="KW-1185">Reference proteome</keyword>
<proteinExistence type="inferred from homology"/>
<comment type="function">
    <text evidence="1">Involved in iron-sulfur cluster biogenesis. Binds a 4Fe-4S cluster, can transfer this cluster to apoproteins, and thereby intervenes in the maturation of Fe/S proteins. Could also act as a scaffold/chaperone for damaged Fe/S proteins.</text>
</comment>
<comment type="cofactor">
    <cofactor evidence="1">
        <name>[4Fe-4S] cluster</name>
        <dbReference type="ChEBI" id="CHEBI:49883"/>
    </cofactor>
    <text evidence="1">Binds 1 [4Fe-4S] cluster per subunit. The cluster is presumably bound at the interface of two monomers.</text>
</comment>
<comment type="subunit">
    <text evidence="1">Homodimer.</text>
</comment>
<comment type="similarity">
    <text evidence="1">Belongs to the NfuA family.</text>
</comment>
<reference key="1">
    <citation type="journal article" date="2006" name="Science">
        <title>A small microbial genome: the end of a long symbiotic relationship?</title>
        <authorList>
            <person name="Perez-Brocal V."/>
            <person name="Gil R."/>
            <person name="Ramos S."/>
            <person name="Lamelas A."/>
            <person name="Postigo M."/>
            <person name="Michelena J.M."/>
            <person name="Silva F.J."/>
            <person name="Moya A."/>
            <person name="Latorre A."/>
        </authorList>
    </citation>
    <scope>NUCLEOTIDE SEQUENCE [LARGE SCALE GENOMIC DNA]</scope>
    <source>
        <strain>Cc</strain>
    </source>
</reference>
<protein>
    <recommendedName>
        <fullName evidence="1">Fe/S biogenesis protein NfuA</fullName>
    </recommendedName>
</protein>
<feature type="chain" id="PRO_1000186741" description="Fe/S biogenesis protein NfuA">
    <location>
        <begin position="1"/>
        <end position="193"/>
    </location>
</feature>
<feature type="binding site" evidence="1">
    <location>
        <position position="151"/>
    </location>
    <ligand>
        <name>[4Fe-4S] cluster</name>
        <dbReference type="ChEBI" id="CHEBI:49883"/>
    </ligand>
</feature>
<feature type="binding site" evidence="1">
    <location>
        <position position="154"/>
    </location>
    <ligand>
        <name>[4Fe-4S] cluster</name>
        <dbReference type="ChEBI" id="CHEBI:49883"/>
    </ligand>
</feature>
<name>NFUA_BUCCC</name>
<sequence length="193" mass="21826">MIKISKKAKKYIIKLLSKQELGTNIRIFVDSPGTMYAECGMAYCDMNDIDKKNDHKFSFDFFDVYIHKLMLPFLKDSIIDLVKNDLGTKITLKAPYAKILNKSKNFSQLQNSIKNFLTTQINPKLLLHGGSVALYDITDSGVVFLKFSGGCNGCSMIDITLKKGIEKKLIKNFPEISSVEDVTHHISGKHSYY</sequence>